<keyword id="KW-1185">Reference proteome</keyword>
<keyword id="KW-0687">Ribonucleoprotein</keyword>
<keyword id="KW-0689">Ribosomal protein</keyword>
<keyword id="KW-0694">RNA-binding</keyword>
<keyword id="KW-0699">rRNA-binding</keyword>
<comment type="function">
    <text evidence="1">This protein binds to 23S rRNA in the presence of protein L20.</text>
</comment>
<comment type="subunit">
    <text evidence="1">Part of the 50S ribosomal subunit. Contacts protein L20.</text>
</comment>
<comment type="similarity">
    <text evidence="1">Belongs to the bacterial ribosomal protein bL21 family.</text>
</comment>
<feature type="chain" id="PRO_0000269314" description="Large ribosomal subunit protein bL21">
    <location>
        <begin position="1"/>
        <end position="102"/>
    </location>
</feature>
<organism>
    <name type="scientific">Nitratidesulfovibrio vulgaris (strain ATCC 29579 / DSM 644 / CCUG 34227 / NCIMB 8303 / VKM B-1760 / Hildenborough)</name>
    <name type="common">Desulfovibrio vulgaris</name>
    <dbReference type="NCBI Taxonomy" id="882"/>
    <lineage>
        <taxon>Bacteria</taxon>
        <taxon>Pseudomonadati</taxon>
        <taxon>Thermodesulfobacteriota</taxon>
        <taxon>Desulfovibrionia</taxon>
        <taxon>Desulfovibrionales</taxon>
        <taxon>Desulfovibrionaceae</taxon>
        <taxon>Nitratidesulfovibrio</taxon>
    </lineage>
</organism>
<sequence>MYAIIETGGKQFRVEEGSKIFVEKLASEAGSEIVIDKVLMLGGGDVKVGAPYVENAKVTAEVVEHGRGEKVVIFKKWRRNDSRKKQGHRQDFTALKIKAITA</sequence>
<name>RL21_NITV2</name>
<gene>
    <name evidence="1" type="primary">rplU</name>
    <name type="ordered locus">DVU_0927</name>
</gene>
<proteinExistence type="inferred from homology"/>
<accession>Q72DK2</accession>
<reference key="1">
    <citation type="journal article" date="2004" name="Nat. Biotechnol.">
        <title>The genome sequence of the anaerobic, sulfate-reducing bacterium Desulfovibrio vulgaris Hildenborough.</title>
        <authorList>
            <person name="Heidelberg J.F."/>
            <person name="Seshadri R."/>
            <person name="Haveman S.A."/>
            <person name="Hemme C.L."/>
            <person name="Paulsen I.T."/>
            <person name="Kolonay J.F."/>
            <person name="Eisen J.A."/>
            <person name="Ward N.L."/>
            <person name="Methe B.A."/>
            <person name="Brinkac L.M."/>
            <person name="Daugherty S.C."/>
            <person name="DeBoy R.T."/>
            <person name="Dodson R.J."/>
            <person name="Durkin A.S."/>
            <person name="Madupu R."/>
            <person name="Nelson W.C."/>
            <person name="Sullivan S.A."/>
            <person name="Fouts D.E."/>
            <person name="Haft D.H."/>
            <person name="Selengut J."/>
            <person name="Peterson J.D."/>
            <person name="Davidsen T.M."/>
            <person name="Zafar N."/>
            <person name="Zhou L."/>
            <person name="Radune D."/>
            <person name="Dimitrov G."/>
            <person name="Hance M."/>
            <person name="Tran K."/>
            <person name="Khouri H.M."/>
            <person name="Gill J."/>
            <person name="Utterback T.R."/>
            <person name="Feldblyum T.V."/>
            <person name="Wall J.D."/>
            <person name="Voordouw G."/>
            <person name="Fraser C.M."/>
        </authorList>
    </citation>
    <scope>NUCLEOTIDE SEQUENCE [LARGE SCALE GENOMIC DNA]</scope>
    <source>
        <strain>ATCC 29579 / DSM 644 / CCUG 34227 / NCIMB 8303 / VKM B-1760 / Hildenborough</strain>
    </source>
</reference>
<dbReference type="EMBL" id="AE017285">
    <property type="protein sequence ID" value="AAS95407.1"/>
    <property type="molecule type" value="Genomic_DNA"/>
</dbReference>
<dbReference type="RefSeq" id="WP_010938226.1">
    <property type="nucleotide sequence ID" value="NC_002937.3"/>
</dbReference>
<dbReference type="RefSeq" id="YP_010148.1">
    <property type="nucleotide sequence ID" value="NC_002937.3"/>
</dbReference>
<dbReference type="SMR" id="Q72DK2"/>
<dbReference type="STRING" id="882.DVU_0927"/>
<dbReference type="PaxDb" id="882-DVU_0927"/>
<dbReference type="EnsemblBacteria" id="AAS95407">
    <property type="protein sequence ID" value="AAS95407"/>
    <property type="gene ID" value="DVU_0927"/>
</dbReference>
<dbReference type="KEGG" id="dvu:DVU_0927"/>
<dbReference type="PATRIC" id="fig|882.5.peg.871"/>
<dbReference type="eggNOG" id="COG0261">
    <property type="taxonomic scope" value="Bacteria"/>
</dbReference>
<dbReference type="HOGENOM" id="CLU_061463_3_2_7"/>
<dbReference type="OrthoDB" id="9813334at2"/>
<dbReference type="PhylomeDB" id="Q72DK2"/>
<dbReference type="Proteomes" id="UP000002194">
    <property type="component" value="Chromosome"/>
</dbReference>
<dbReference type="GO" id="GO:0005737">
    <property type="term" value="C:cytoplasm"/>
    <property type="evidence" value="ECO:0007669"/>
    <property type="project" value="UniProtKB-ARBA"/>
</dbReference>
<dbReference type="GO" id="GO:1990904">
    <property type="term" value="C:ribonucleoprotein complex"/>
    <property type="evidence" value="ECO:0007669"/>
    <property type="project" value="UniProtKB-KW"/>
</dbReference>
<dbReference type="GO" id="GO:0005840">
    <property type="term" value="C:ribosome"/>
    <property type="evidence" value="ECO:0007669"/>
    <property type="project" value="UniProtKB-KW"/>
</dbReference>
<dbReference type="GO" id="GO:0019843">
    <property type="term" value="F:rRNA binding"/>
    <property type="evidence" value="ECO:0007669"/>
    <property type="project" value="UniProtKB-UniRule"/>
</dbReference>
<dbReference type="GO" id="GO:0003735">
    <property type="term" value="F:structural constituent of ribosome"/>
    <property type="evidence" value="ECO:0007669"/>
    <property type="project" value="InterPro"/>
</dbReference>
<dbReference type="GO" id="GO:0006412">
    <property type="term" value="P:translation"/>
    <property type="evidence" value="ECO:0007669"/>
    <property type="project" value="UniProtKB-UniRule"/>
</dbReference>
<dbReference type="HAMAP" id="MF_01363">
    <property type="entry name" value="Ribosomal_bL21"/>
    <property type="match status" value="1"/>
</dbReference>
<dbReference type="InterPro" id="IPR028909">
    <property type="entry name" value="bL21-like"/>
</dbReference>
<dbReference type="InterPro" id="IPR036164">
    <property type="entry name" value="bL21-like_sf"/>
</dbReference>
<dbReference type="InterPro" id="IPR001787">
    <property type="entry name" value="Ribosomal_bL21"/>
</dbReference>
<dbReference type="NCBIfam" id="TIGR00061">
    <property type="entry name" value="L21"/>
    <property type="match status" value="1"/>
</dbReference>
<dbReference type="PANTHER" id="PTHR21349">
    <property type="entry name" value="50S RIBOSOMAL PROTEIN L21"/>
    <property type="match status" value="1"/>
</dbReference>
<dbReference type="PANTHER" id="PTHR21349:SF0">
    <property type="entry name" value="LARGE RIBOSOMAL SUBUNIT PROTEIN BL21M"/>
    <property type="match status" value="1"/>
</dbReference>
<dbReference type="Pfam" id="PF00829">
    <property type="entry name" value="Ribosomal_L21p"/>
    <property type="match status" value="1"/>
</dbReference>
<dbReference type="SUPFAM" id="SSF141091">
    <property type="entry name" value="L21p-like"/>
    <property type="match status" value="1"/>
</dbReference>
<evidence type="ECO:0000255" key="1">
    <source>
        <dbReference type="HAMAP-Rule" id="MF_01363"/>
    </source>
</evidence>
<evidence type="ECO:0000305" key="2"/>
<protein>
    <recommendedName>
        <fullName evidence="1">Large ribosomal subunit protein bL21</fullName>
    </recommendedName>
    <alternativeName>
        <fullName evidence="2">50S ribosomal protein L21</fullName>
    </alternativeName>
</protein>